<comment type="function">
    <text evidence="1">Catalyzes the reversible phosphorylation of S-methyl-5'-thioadenosine (MTA) to adenine and 5-methylthioribose-1-phosphate. Involved in the breakdown of MTA, a major by-product of polyamine biosynthesis. Responsible for the first step in the methionine salvage pathway after MTA has been generated from S-adenosylmethionine. Has broad substrate specificity with 6-aminopurine nucleosides as preferred substrates.</text>
</comment>
<comment type="catalytic activity">
    <reaction evidence="1">
        <text>S-methyl-5'-thioadenosine + phosphate = 5-(methylsulfanyl)-alpha-D-ribose 1-phosphate + adenine</text>
        <dbReference type="Rhea" id="RHEA:11852"/>
        <dbReference type="ChEBI" id="CHEBI:16708"/>
        <dbReference type="ChEBI" id="CHEBI:17509"/>
        <dbReference type="ChEBI" id="CHEBI:43474"/>
        <dbReference type="ChEBI" id="CHEBI:58533"/>
        <dbReference type="EC" id="2.4.2.28"/>
    </reaction>
</comment>
<comment type="pathway">
    <text evidence="1">Amino-acid biosynthesis; L-methionine biosynthesis via salvage pathway; S-methyl-5-thio-alpha-D-ribose 1-phosphate from S-methyl-5'-thioadenosine (phosphorylase route): step 1/1.</text>
</comment>
<comment type="subunit">
    <text evidence="1">Homotrimer.</text>
</comment>
<comment type="subcellular location">
    <subcellularLocation>
        <location evidence="1">Cytoplasm</location>
    </subcellularLocation>
    <subcellularLocation>
        <location evidence="1">Nucleus</location>
    </subcellularLocation>
</comment>
<comment type="similarity">
    <text evidence="1">Belongs to the PNP/MTAP phosphorylase family. MTAP subfamily.</text>
</comment>
<feature type="chain" id="PRO_0000415117" description="S-methyl-5'-thioadenosine phosphorylase">
    <location>
        <begin position="1"/>
        <end position="279"/>
    </location>
</feature>
<feature type="binding site" evidence="1">
    <location>
        <position position="13"/>
    </location>
    <ligand>
        <name>phosphate</name>
        <dbReference type="ChEBI" id="CHEBI:43474"/>
    </ligand>
</feature>
<feature type="binding site" evidence="1">
    <location>
        <begin position="55"/>
        <end position="56"/>
    </location>
    <ligand>
        <name>phosphate</name>
        <dbReference type="ChEBI" id="CHEBI:43474"/>
    </ligand>
</feature>
<feature type="binding site" evidence="1">
    <location>
        <begin position="88"/>
        <end position="89"/>
    </location>
    <ligand>
        <name>phosphate</name>
        <dbReference type="ChEBI" id="CHEBI:43474"/>
    </ligand>
</feature>
<feature type="binding site" evidence="1">
    <location>
        <position position="191"/>
    </location>
    <ligand>
        <name>substrate</name>
    </ligand>
</feature>
<feature type="binding site" evidence="1">
    <location>
        <position position="192"/>
    </location>
    <ligand>
        <name>phosphate</name>
        <dbReference type="ChEBI" id="CHEBI:43474"/>
    </ligand>
</feature>
<feature type="binding site" evidence="1">
    <location>
        <begin position="215"/>
        <end position="217"/>
    </location>
    <ligand>
        <name>substrate</name>
    </ligand>
</feature>
<feature type="site" description="Important for substrate specificity" evidence="1">
    <location>
        <position position="173"/>
    </location>
</feature>
<feature type="site" description="Important for substrate specificity" evidence="1">
    <location>
        <position position="228"/>
    </location>
</feature>
<proteinExistence type="inferred from homology"/>
<dbReference type="EC" id="2.4.2.28" evidence="1"/>
<dbReference type="EMBL" id="CH477847">
    <property type="protein sequence ID" value="EAT35677.1"/>
    <property type="molecule type" value="Genomic_DNA"/>
</dbReference>
<dbReference type="EMBL" id="CH477847">
    <property type="protein sequence ID" value="EAT35678.1"/>
    <property type="molecule type" value="Genomic_DNA"/>
</dbReference>
<dbReference type="RefSeq" id="XP_001655912.1">
    <property type="nucleotide sequence ID" value="XM_001655862.1"/>
</dbReference>
<dbReference type="SMR" id="Q16MW6"/>
<dbReference type="FunCoup" id="Q16MW6">
    <property type="interactions" value="1349"/>
</dbReference>
<dbReference type="STRING" id="7159.Q16MW6"/>
<dbReference type="PaxDb" id="7159-AAEL012172-PA"/>
<dbReference type="EnsemblMetazoa" id="AAEL012172-RB">
    <property type="protein sequence ID" value="AAEL012172-PB"/>
    <property type="gene ID" value="AAEL012172"/>
</dbReference>
<dbReference type="EnsemblMetazoa" id="AAEL012172-RC">
    <property type="protein sequence ID" value="AAEL012172-PC"/>
    <property type="gene ID" value="AAEL012172"/>
</dbReference>
<dbReference type="GeneID" id="5575922"/>
<dbReference type="KEGG" id="aag:5575922"/>
<dbReference type="VEuPathDB" id="VectorBase:AAEL012172"/>
<dbReference type="eggNOG" id="KOG3985">
    <property type="taxonomic scope" value="Eukaryota"/>
</dbReference>
<dbReference type="HOGENOM" id="CLU_054456_0_0_1"/>
<dbReference type="InParanoid" id="Q16MW6"/>
<dbReference type="OMA" id="ADPFCPE"/>
<dbReference type="OrthoDB" id="431409at2759"/>
<dbReference type="PhylomeDB" id="Q16MW6"/>
<dbReference type="UniPathway" id="UPA00904">
    <property type="reaction ID" value="UER00873"/>
</dbReference>
<dbReference type="Proteomes" id="UP000008820">
    <property type="component" value="Chromosome 2"/>
</dbReference>
<dbReference type="Proteomes" id="UP000682892">
    <property type="component" value="Chromosome 2"/>
</dbReference>
<dbReference type="GO" id="GO:0005829">
    <property type="term" value="C:cytosol"/>
    <property type="evidence" value="ECO:0007669"/>
    <property type="project" value="TreeGrafter"/>
</dbReference>
<dbReference type="GO" id="GO:0005634">
    <property type="term" value="C:nucleus"/>
    <property type="evidence" value="ECO:0007669"/>
    <property type="project" value="UniProtKB-SubCell"/>
</dbReference>
<dbReference type="GO" id="GO:0017061">
    <property type="term" value="F:S-methyl-5-thioadenosine phosphorylase activity"/>
    <property type="evidence" value="ECO:0007669"/>
    <property type="project" value="UniProtKB-UniRule"/>
</dbReference>
<dbReference type="GO" id="GO:0019509">
    <property type="term" value="P:L-methionine salvage from methylthioadenosine"/>
    <property type="evidence" value="ECO:0007669"/>
    <property type="project" value="UniProtKB-UniRule"/>
</dbReference>
<dbReference type="GO" id="GO:0006166">
    <property type="term" value="P:purine ribonucleoside salvage"/>
    <property type="evidence" value="ECO:0007669"/>
    <property type="project" value="UniProtKB-KW"/>
</dbReference>
<dbReference type="CDD" id="cd09010">
    <property type="entry name" value="MTAP_SsMTAPII_like_MTIP"/>
    <property type="match status" value="1"/>
</dbReference>
<dbReference type="FunFam" id="3.40.50.1580:FF:000006">
    <property type="entry name" value="Purine nucleoside phosphorylase"/>
    <property type="match status" value="1"/>
</dbReference>
<dbReference type="Gene3D" id="3.40.50.1580">
    <property type="entry name" value="Nucleoside phosphorylase domain"/>
    <property type="match status" value="1"/>
</dbReference>
<dbReference type="HAMAP" id="MF_01963">
    <property type="entry name" value="MTAP"/>
    <property type="match status" value="1"/>
</dbReference>
<dbReference type="InterPro" id="IPR010044">
    <property type="entry name" value="MTAP"/>
</dbReference>
<dbReference type="InterPro" id="IPR000845">
    <property type="entry name" value="Nucleoside_phosphorylase_d"/>
</dbReference>
<dbReference type="InterPro" id="IPR035994">
    <property type="entry name" value="Nucleoside_phosphorylase_sf"/>
</dbReference>
<dbReference type="InterPro" id="IPR018099">
    <property type="entry name" value="Purine_phosphorylase-2_CS"/>
</dbReference>
<dbReference type="NCBIfam" id="TIGR01694">
    <property type="entry name" value="MTAP"/>
    <property type="match status" value="1"/>
</dbReference>
<dbReference type="PANTHER" id="PTHR42679">
    <property type="entry name" value="S-METHYL-5'-THIOADENOSINE PHOSPHORYLASE"/>
    <property type="match status" value="1"/>
</dbReference>
<dbReference type="PANTHER" id="PTHR42679:SF2">
    <property type="entry name" value="S-METHYL-5'-THIOADENOSINE PHOSPHORYLASE"/>
    <property type="match status" value="1"/>
</dbReference>
<dbReference type="Pfam" id="PF01048">
    <property type="entry name" value="PNP_UDP_1"/>
    <property type="match status" value="1"/>
</dbReference>
<dbReference type="SUPFAM" id="SSF53167">
    <property type="entry name" value="Purine and uridine phosphorylases"/>
    <property type="match status" value="1"/>
</dbReference>
<dbReference type="PROSITE" id="PS01240">
    <property type="entry name" value="PNP_MTAP_2"/>
    <property type="match status" value="1"/>
</dbReference>
<keyword id="KW-0963">Cytoplasm</keyword>
<keyword id="KW-0328">Glycosyltransferase</keyword>
<keyword id="KW-0539">Nucleus</keyword>
<keyword id="KW-0660">Purine salvage</keyword>
<keyword id="KW-1185">Reference proteome</keyword>
<keyword id="KW-0808">Transferase</keyword>
<evidence type="ECO:0000255" key="1">
    <source>
        <dbReference type="HAMAP-Rule" id="MF_03155"/>
    </source>
</evidence>
<gene>
    <name type="ORF">AAEL012172</name>
    <name type="ORF">AAEL012179</name>
</gene>
<name>MTAP_AEDAE</name>
<reference key="1">
    <citation type="journal article" date="2007" name="Science">
        <title>Genome sequence of Aedes aegypti, a major arbovirus vector.</title>
        <authorList>
            <person name="Nene V."/>
            <person name="Wortman J.R."/>
            <person name="Lawson D."/>
            <person name="Haas B.J."/>
            <person name="Kodira C.D."/>
            <person name="Tu Z.J."/>
            <person name="Loftus B.J."/>
            <person name="Xi Z."/>
            <person name="Megy K."/>
            <person name="Grabherr M."/>
            <person name="Ren Q."/>
            <person name="Zdobnov E.M."/>
            <person name="Lobo N.F."/>
            <person name="Campbell K.S."/>
            <person name="Brown S.E."/>
            <person name="Bonaldo M.F."/>
            <person name="Zhu J."/>
            <person name="Sinkins S.P."/>
            <person name="Hogenkamp D.G."/>
            <person name="Amedeo P."/>
            <person name="Arensburger P."/>
            <person name="Atkinson P.W."/>
            <person name="Bidwell S.L."/>
            <person name="Biedler J."/>
            <person name="Birney E."/>
            <person name="Bruggner R.V."/>
            <person name="Costas J."/>
            <person name="Coy M.R."/>
            <person name="Crabtree J."/>
            <person name="Crawford M."/>
            <person name="DeBruyn B."/>
            <person name="DeCaprio D."/>
            <person name="Eiglmeier K."/>
            <person name="Eisenstadt E."/>
            <person name="El-Dorry H."/>
            <person name="Gelbart W.M."/>
            <person name="Gomes S.L."/>
            <person name="Hammond M."/>
            <person name="Hannick L.I."/>
            <person name="Hogan J.R."/>
            <person name="Holmes M.H."/>
            <person name="Jaffe D."/>
            <person name="Johnston S.J."/>
            <person name="Kennedy R.C."/>
            <person name="Koo H."/>
            <person name="Kravitz S."/>
            <person name="Kriventseva E.V."/>
            <person name="Kulp D."/>
            <person name="Labutti K."/>
            <person name="Lee E."/>
            <person name="Li S."/>
            <person name="Lovin D.D."/>
            <person name="Mao C."/>
            <person name="Mauceli E."/>
            <person name="Menck C.F."/>
            <person name="Miller J.R."/>
            <person name="Montgomery P."/>
            <person name="Mori A."/>
            <person name="Nascimento A.L."/>
            <person name="Naveira H.F."/>
            <person name="Nusbaum C."/>
            <person name="O'Leary S.B."/>
            <person name="Orvis J."/>
            <person name="Pertea M."/>
            <person name="Quesneville H."/>
            <person name="Reidenbach K.R."/>
            <person name="Rogers Y.-H.C."/>
            <person name="Roth C.W."/>
            <person name="Schneider J.R."/>
            <person name="Schatz M."/>
            <person name="Shumway M."/>
            <person name="Stanke M."/>
            <person name="Stinson E.O."/>
            <person name="Tubio J.M.C."/>
            <person name="Vanzee J.P."/>
            <person name="Verjovski-Almeida S."/>
            <person name="Werner D."/>
            <person name="White O.R."/>
            <person name="Wyder S."/>
            <person name="Zeng Q."/>
            <person name="Zhao Q."/>
            <person name="Zhao Y."/>
            <person name="Hill C.A."/>
            <person name="Raikhel A.S."/>
            <person name="Soares M.B."/>
            <person name="Knudson D.L."/>
            <person name="Lee N.H."/>
            <person name="Galagan J."/>
            <person name="Salzberg S.L."/>
            <person name="Paulsen I.T."/>
            <person name="Dimopoulos G."/>
            <person name="Collins F.H."/>
            <person name="Bruce B."/>
            <person name="Fraser-Liggett C.M."/>
            <person name="Severson D.W."/>
        </authorList>
    </citation>
    <scope>NUCLEOTIDE SEQUENCE [LARGE SCALE GENOMIC DNA]</scope>
    <source>
        <strain>LVPib12</strain>
    </source>
</reference>
<organism>
    <name type="scientific">Aedes aegypti</name>
    <name type="common">Yellowfever mosquito</name>
    <name type="synonym">Culex aegypti</name>
    <dbReference type="NCBI Taxonomy" id="7159"/>
    <lineage>
        <taxon>Eukaryota</taxon>
        <taxon>Metazoa</taxon>
        <taxon>Ecdysozoa</taxon>
        <taxon>Arthropoda</taxon>
        <taxon>Hexapoda</taxon>
        <taxon>Insecta</taxon>
        <taxon>Pterygota</taxon>
        <taxon>Neoptera</taxon>
        <taxon>Endopterygota</taxon>
        <taxon>Diptera</taxon>
        <taxon>Nematocera</taxon>
        <taxon>Culicoidea</taxon>
        <taxon>Culicidae</taxon>
        <taxon>Culicinae</taxon>
        <taxon>Aedini</taxon>
        <taxon>Aedes</taxon>
        <taxon>Stegomyia</taxon>
    </lineage>
</organism>
<sequence length="279" mass="30396">MRPAIKIGIIGGSGLDDSQILESRSEKVVSTHFGNPSDVLIEGKIAGVDCVLLARHGRNHSIMPSNVNYRANIWALKTVGCTHVIVSTATGSLQERIHPGDLVIPDNFIDRTTKRAQTFYDGNDMLVGVCHVPMEPAFCSRTREVLIETAKELGLVGVHNKGTVVTIEGPRFSSKAESNLFRQWGADLVNMTLVPEVVLAKEAGLCYAAIAMATDYDCWRDCGENVNVADVMATFKKNVTKVTQLITAVIPKIAEMDWTETIGELTKTVNGSIMLPHAY</sequence>
<accession>Q16MW6</accession>
<protein>
    <recommendedName>
        <fullName evidence="1">S-methyl-5'-thioadenosine phosphorylase</fullName>
        <ecNumber evidence="1">2.4.2.28</ecNumber>
    </recommendedName>
    <alternativeName>
        <fullName evidence="1">5'-methylthioadenosine phosphorylase</fullName>
        <shortName evidence="1">MTA phosphorylase</shortName>
        <shortName evidence="1">MTAP</shortName>
        <shortName evidence="1">MTAPase</shortName>
    </alternativeName>
</protein>